<keyword id="KW-0274">FAD</keyword>
<keyword id="KW-0285">Flavoprotein</keyword>
<keyword id="KW-0444">Lipid biosynthesis</keyword>
<keyword id="KW-0443">Lipid metabolism</keyword>
<keyword id="KW-0560">Oxidoreductase</keyword>
<keyword id="KW-0594">Phospholipid biosynthesis</keyword>
<keyword id="KW-1208">Phospholipid metabolism</keyword>
<feature type="chain" id="PRO_0000351455" description="Digeranylgeranylglycerophospholipid reductase 1">
    <location>
        <begin position="1"/>
        <end position="408"/>
    </location>
</feature>
<feature type="binding site" evidence="1">
    <location>
        <position position="15"/>
    </location>
    <ligand>
        <name>FAD</name>
        <dbReference type="ChEBI" id="CHEBI:57692"/>
    </ligand>
</feature>
<feature type="binding site" evidence="1">
    <location>
        <position position="34"/>
    </location>
    <ligand>
        <name>FAD</name>
        <dbReference type="ChEBI" id="CHEBI:57692"/>
    </ligand>
</feature>
<feature type="binding site" evidence="1">
    <location>
        <position position="45"/>
    </location>
    <ligand>
        <name>FAD</name>
        <dbReference type="ChEBI" id="CHEBI:57692"/>
    </ligand>
</feature>
<feature type="binding site" evidence="1">
    <location>
        <position position="46"/>
    </location>
    <ligand>
        <name>FAD</name>
        <dbReference type="ChEBI" id="CHEBI:57692"/>
    </ligand>
</feature>
<feature type="binding site" evidence="1">
    <location>
        <position position="48"/>
    </location>
    <ligand>
        <name>FAD</name>
        <dbReference type="ChEBI" id="CHEBI:57692"/>
    </ligand>
</feature>
<feature type="binding site" evidence="1">
    <location>
        <position position="99"/>
    </location>
    <ligand>
        <name>FAD</name>
        <dbReference type="ChEBI" id="CHEBI:57692"/>
    </ligand>
</feature>
<feature type="binding site" evidence="1">
    <location>
        <position position="123"/>
    </location>
    <ligand>
        <name>FAD</name>
        <dbReference type="ChEBI" id="CHEBI:57692"/>
    </ligand>
</feature>
<feature type="binding site" evidence="1">
    <location>
        <position position="279"/>
    </location>
    <ligand>
        <name>FAD</name>
        <dbReference type="ChEBI" id="CHEBI:57692"/>
    </ligand>
</feature>
<feature type="binding site" evidence="1">
    <location>
        <position position="291"/>
    </location>
    <ligand>
        <name>FAD</name>
        <dbReference type="ChEBI" id="CHEBI:57692"/>
    </ligand>
</feature>
<feature type="binding site" evidence="1">
    <location>
        <position position="292"/>
    </location>
    <ligand>
        <name>FAD</name>
        <dbReference type="ChEBI" id="CHEBI:57692"/>
    </ligand>
</feature>
<comment type="function">
    <text evidence="1">Is involved in the reduction of 2,3-digeranylgeranylglycerophospholipids (unsaturated archaeols) into 2,3-diphytanylglycerophospholipids (saturated archaeols) in the biosynthesis of archaeal membrane lipids. Catalyzes the formation of archaetidic acid (2,3-di-O-phytanyl-sn-glyceryl phosphate) from 2,3-di-O-geranylgeranylglyceryl phosphate (DGGGP) via the hydrogenation of each double bond of the isoprenoid chains. Is also probably able to reduce double bonds of geranyl groups in CDP-2,3-bis-O-(geranylgeranyl)-sn-glycerol and archaetidylserine, thus acting at various stages in the biosynthesis of archaeal membrane lipids.</text>
</comment>
<comment type="catalytic activity">
    <reaction evidence="1">
        <text>a 2,3-bis-O-phytanyl-sn-glycerol 1-phospholipid + 8 oxidized 2[4Fe-4S]-[ferredoxin] = a 2,3-bis-O-(geranylgeranyl)-sn-glycerol 1-phospholipid + 8 reduced 2[4Fe-4S]-[ferredoxin] + 16 H(+)</text>
        <dbReference type="Rhea" id="RHEA:54324"/>
        <dbReference type="Rhea" id="RHEA-COMP:10002"/>
        <dbReference type="Rhea" id="RHEA-COMP:10004"/>
        <dbReference type="ChEBI" id="CHEBI:15378"/>
        <dbReference type="ChEBI" id="CHEBI:33722"/>
        <dbReference type="ChEBI" id="CHEBI:33723"/>
        <dbReference type="ChEBI" id="CHEBI:138139"/>
        <dbReference type="ChEBI" id="CHEBI:138140"/>
        <dbReference type="EC" id="1.3.7.11"/>
    </reaction>
    <physiologicalReaction direction="right-to-left" evidence="1">
        <dbReference type="Rhea" id="RHEA:54326"/>
    </physiologicalReaction>
</comment>
<comment type="catalytic activity">
    <reaction evidence="1">
        <text>2,3-bis-O-(phytanyl)-sn-glycerol 1-phosphate + 8 oxidized 2[4Fe-4S]-[ferredoxin] = 2,3-bis-O-(geranylgeranyl)-sn-glycerol 1-phosphate + 8 reduced 2[4Fe-4S]-[ferredoxin] + 16 H(+)</text>
        <dbReference type="Rhea" id="RHEA:36159"/>
        <dbReference type="Rhea" id="RHEA-COMP:10002"/>
        <dbReference type="Rhea" id="RHEA-COMP:10004"/>
        <dbReference type="ChEBI" id="CHEBI:15378"/>
        <dbReference type="ChEBI" id="CHEBI:33722"/>
        <dbReference type="ChEBI" id="CHEBI:33723"/>
        <dbReference type="ChEBI" id="CHEBI:58837"/>
        <dbReference type="ChEBI" id="CHEBI:73125"/>
        <dbReference type="EC" id="1.3.7.11"/>
    </reaction>
    <physiologicalReaction direction="right-to-left" evidence="1">
        <dbReference type="Rhea" id="RHEA:36161"/>
    </physiologicalReaction>
</comment>
<comment type="catalytic activity">
    <reaction evidence="1">
        <text>a 2,3-bis-O-phytanyl-sn-glycerol 1-phospholipid + 8 A = a 2,3-bis-O-(geranylgeranyl)-sn-glycerol 1-phospholipid + 8 AH2</text>
        <dbReference type="Rhea" id="RHEA:64376"/>
        <dbReference type="ChEBI" id="CHEBI:13193"/>
        <dbReference type="ChEBI" id="CHEBI:17499"/>
        <dbReference type="ChEBI" id="CHEBI:138139"/>
        <dbReference type="ChEBI" id="CHEBI:138140"/>
    </reaction>
    <physiologicalReaction direction="right-to-left" evidence="1">
        <dbReference type="Rhea" id="RHEA:64378"/>
    </physiologicalReaction>
</comment>
<comment type="catalytic activity">
    <reaction evidence="1">
        <text>CDP-2,3-bis-O-(geranylgeranyl)-sn-glycerol + 8 AH2 = CDP-2,3-bis-O-(phytanyl)-sn-glycerol + 8 A</text>
        <dbReference type="Rhea" id="RHEA:84207"/>
        <dbReference type="ChEBI" id="CHEBI:13193"/>
        <dbReference type="ChEBI" id="CHEBI:17499"/>
        <dbReference type="ChEBI" id="CHEBI:58838"/>
        <dbReference type="ChEBI" id="CHEBI:74004"/>
    </reaction>
    <physiologicalReaction direction="left-to-right" evidence="1">
        <dbReference type="Rhea" id="RHEA:84208"/>
    </physiologicalReaction>
</comment>
<comment type="catalytic activity">
    <reaction evidence="1">
        <text>archaetidylserine + 8 AH2 = 2,3-bis-O-phytanyl-sn-glycero-3-phospho-L-serine + 8 A</text>
        <dbReference type="Rhea" id="RHEA:84215"/>
        <dbReference type="ChEBI" id="CHEBI:13193"/>
        <dbReference type="ChEBI" id="CHEBI:17499"/>
        <dbReference type="ChEBI" id="CHEBI:71517"/>
        <dbReference type="ChEBI" id="CHEBI:74853"/>
    </reaction>
    <physiologicalReaction direction="left-to-right" evidence="1">
        <dbReference type="Rhea" id="RHEA:84216"/>
    </physiologicalReaction>
</comment>
<comment type="cofactor">
    <cofactor evidence="1">
        <name>FAD</name>
        <dbReference type="ChEBI" id="CHEBI:57692"/>
    </cofactor>
    <text evidence="1">Binds 1 FAD per subunit.</text>
</comment>
<comment type="pathway">
    <text evidence="1">Membrane lipid metabolism; glycerophospholipid metabolism.</text>
</comment>
<comment type="miscellaneous">
    <text evidence="1">Reduction reaction proceeds via syn addition of hydrogen for double bonds.</text>
</comment>
<comment type="similarity">
    <text evidence="1">Belongs to the geranylgeranyl reductase family. DGGGPL reductase subfamily.</text>
</comment>
<sequence>MKDQYDLVVVGAGPAGSIAATTAAKKGLSVLMLEKRQEIGEPVRCAEGVGKKRLRQHIELDEKWLCGEVSSAKIISPNGTTLTMAEEDAGSEVGYVLDRKIFDRTLVELSGEAGVDIMVKARVTGLIIEENTVCGVEMMHLGKTYSIRSKLVIGADGVESKVGRWAGIDTSLKPSHIETCAQFLVSGVDIDQSSCYFYMGNKVAPGGYVWVFPKGNNMANVGIGILGSRAGEKKPIEYLTDFVEANYPNGSIIEQVAGAVPASGPIEKTIANGLMLVGDAARQSDPFTGGGISNAMDAGLYAGEVAAEAIAQDDVSEKILQKYEKRWRGSFGNEIANNLIVKETFFSLSDEDLDSLALSIKDVDFKKMDLIDFIAALFKANKKLLWNLRPLFTQKLKQKFSGLTKFKR</sequence>
<reference key="1">
    <citation type="journal article" date="2009" name="ISME J.">
        <title>The genome sequence of the psychrophilic archaeon, Methanococcoides burtonii: the role of genome evolution in cold adaptation.</title>
        <authorList>
            <person name="Allen M.A."/>
            <person name="Lauro F.M."/>
            <person name="Williams T.J."/>
            <person name="Burg D."/>
            <person name="Siddiqui K.S."/>
            <person name="De Francisci D."/>
            <person name="Chong K.W."/>
            <person name="Pilak O."/>
            <person name="Chew H.H."/>
            <person name="De Maere M.Z."/>
            <person name="Ting L."/>
            <person name="Katrib M."/>
            <person name="Ng C."/>
            <person name="Sowers K.R."/>
            <person name="Galperin M.Y."/>
            <person name="Anderson I.J."/>
            <person name="Ivanova N."/>
            <person name="Dalin E."/>
            <person name="Martinez M."/>
            <person name="Lapidus A."/>
            <person name="Hauser L."/>
            <person name="Land M."/>
            <person name="Thomas T."/>
            <person name="Cavicchioli R."/>
        </authorList>
    </citation>
    <scope>NUCLEOTIDE SEQUENCE [LARGE SCALE GENOMIC DNA]</scope>
    <source>
        <strain>DSM 6242 / NBRC 107633 / OCM 468 / ACE-M</strain>
    </source>
</reference>
<evidence type="ECO:0000255" key="1">
    <source>
        <dbReference type="HAMAP-Rule" id="MF_01287"/>
    </source>
</evidence>
<protein>
    <recommendedName>
        <fullName evidence="1">Digeranylgeranylglycerophospholipid reductase 1</fullName>
        <shortName evidence="1">DGGGPL reductase 1</shortName>
        <ecNumber evidence="1">1.3.7.11</ecNumber>
    </recommendedName>
    <alternativeName>
        <fullName evidence="1">2,3-bis-O-geranylgeranylglyceryl phosphate reductase 1</fullName>
    </alternativeName>
    <alternativeName>
        <fullName evidence="1">Geranylgeranyl reductase 1</fullName>
        <shortName evidence="1">GGR 1</shortName>
    </alternativeName>
</protein>
<proteinExistence type="inferred from homology"/>
<gene>
    <name type="ordered locus">Mbur_0369</name>
</gene>
<dbReference type="EC" id="1.3.7.11" evidence="1"/>
<dbReference type="EMBL" id="CP000300">
    <property type="protein sequence ID" value="ABE51364.1"/>
    <property type="molecule type" value="Genomic_DNA"/>
</dbReference>
<dbReference type="RefSeq" id="WP_011498526.1">
    <property type="nucleotide sequence ID" value="NC_007955.1"/>
</dbReference>
<dbReference type="SMR" id="Q12YW2"/>
<dbReference type="STRING" id="259564.Mbur_0369"/>
<dbReference type="GeneID" id="3997582"/>
<dbReference type="KEGG" id="mbu:Mbur_0369"/>
<dbReference type="HOGENOM" id="CLU_024648_0_0_2"/>
<dbReference type="OrthoDB" id="6062at2157"/>
<dbReference type="UniPathway" id="UPA00940"/>
<dbReference type="Proteomes" id="UP000001979">
    <property type="component" value="Chromosome"/>
</dbReference>
<dbReference type="GO" id="GO:0016020">
    <property type="term" value="C:membrane"/>
    <property type="evidence" value="ECO:0007669"/>
    <property type="project" value="GOC"/>
</dbReference>
<dbReference type="GO" id="GO:0050660">
    <property type="term" value="F:flavin adenine dinucleotide binding"/>
    <property type="evidence" value="ECO:0007669"/>
    <property type="project" value="UniProtKB-UniRule"/>
</dbReference>
<dbReference type="GO" id="GO:0045550">
    <property type="term" value="F:geranylgeranyl reductase activity"/>
    <property type="evidence" value="ECO:0007669"/>
    <property type="project" value="InterPro"/>
</dbReference>
<dbReference type="GO" id="GO:0016636">
    <property type="term" value="F:oxidoreductase activity, acting on the CH-CH group of donors, iron-sulfur protein as acceptor"/>
    <property type="evidence" value="ECO:0007669"/>
    <property type="project" value="UniProtKB-UniRule"/>
</dbReference>
<dbReference type="GO" id="GO:0016628">
    <property type="term" value="F:oxidoreductase activity, acting on the CH-CH group of donors, NAD or NADP as acceptor"/>
    <property type="evidence" value="ECO:0007669"/>
    <property type="project" value="InterPro"/>
</dbReference>
<dbReference type="GO" id="GO:0046474">
    <property type="term" value="P:glycerophospholipid biosynthetic process"/>
    <property type="evidence" value="ECO:0007669"/>
    <property type="project" value="UniProtKB-UniRule"/>
</dbReference>
<dbReference type="GO" id="GO:0046467">
    <property type="term" value="P:membrane lipid biosynthetic process"/>
    <property type="evidence" value="ECO:0007669"/>
    <property type="project" value="InterPro"/>
</dbReference>
<dbReference type="Gene3D" id="3.30.9.10">
    <property type="entry name" value="D-Amino Acid Oxidase, subunit A, domain 2"/>
    <property type="match status" value="1"/>
</dbReference>
<dbReference type="Gene3D" id="3.50.50.60">
    <property type="entry name" value="FAD/NAD(P)-binding domain"/>
    <property type="match status" value="1"/>
</dbReference>
<dbReference type="HAMAP" id="MF_01287">
    <property type="entry name" value="DGGGPL_reductase"/>
    <property type="match status" value="1"/>
</dbReference>
<dbReference type="InterPro" id="IPR023590">
    <property type="entry name" value="DGGGPL_reductase"/>
</dbReference>
<dbReference type="InterPro" id="IPR036188">
    <property type="entry name" value="FAD/NAD-bd_sf"/>
</dbReference>
<dbReference type="InterPro" id="IPR011777">
    <property type="entry name" value="Geranylgeranyl_Rdtase_fam"/>
</dbReference>
<dbReference type="InterPro" id="IPR050407">
    <property type="entry name" value="Geranylgeranyl_reductase"/>
</dbReference>
<dbReference type="InterPro" id="IPR054715">
    <property type="entry name" value="GGR_cat"/>
</dbReference>
<dbReference type="NCBIfam" id="TIGR02032">
    <property type="entry name" value="GG-red-SF"/>
    <property type="match status" value="1"/>
</dbReference>
<dbReference type="PANTHER" id="PTHR42685:SF18">
    <property type="entry name" value="DIGERANYLGERANYLGLYCEROPHOSPHOLIPID REDUCTASE"/>
    <property type="match status" value="1"/>
</dbReference>
<dbReference type="PANTHER" id="PTHR42685">
    <property type="entry name" value="GERANYLGERANYL DIPHOSPHATE REDUCTASE"/>
    <property type="match status" value="1"/>
</dbReference>
<dbReference type="Pfam" id="PF12831">
    <property type="entry name" value="FAD_oxidored"/>
    <property type="match status" value="1"/>
</dbReference>
<dbReference type="Pfam" id="PF22578">
    <property type="entry name" value="GGR_cat"/>
    <property type="match status" value="1"/>
</dbReference>
<dbReference type="PRINTS" id="PR00420">
    <property type="entry name" value="RNGMNOXGNASE"/>
</dbReference>
<dbReference type="SUPFAM" id="SSF51905">
    <property type="entry name" value="FAD/NAD(P)-binding domain"/>
    <property type="match status" value="1"/>
</dbReference>
<accession>Q12YW2</accession>
<name>GGR1_METBU</name>
<organism>
    <name type="scientific">Methanococcoides burtonii (strain DSM 6242 / NBRC 107633 / OCM 468 / ACE-M)</name>
    <dbReference type="NCBI Taxonomy" id="259564"/>
    <lineage>
        <taxon>Archaea</taxon>
        <taxon>Methanobacteriati</taxon>
        <taxon>Methanobacteriota</taxon>
        <taxon>Stenosarchaea group</taxon>
        <taxon>Methanomicrobia</taxon>
        <taxon>Methanosarcinales</taxon>
        <taxon>Methanosarcinaceae</taxon>
        <taxon>Methanococcoides</taxon>
    </lineage>
</organism>